<comment type="similarity">
    <text evidence="1">Belongs to the Gfo/Idh/MocA family.</text>
</comment>
<comment type="sequence caution" evidence="1">
    <conflict type="frameshift">
        <sequence resource="EMBL-CDS" id="AAA57888"/>
    </conflict>
</comment>
<comment type="sequence caution" evidence="1">
    <conflict type="frameshift">
        <sequence resource="EMBL-CDS" id="AAA57889"/>
    </conflict>
</comment>
<comment type="sequence caution" evidence="1">
    <conflict type="erroneous initiation">
        <sequence resource="EMBL-CDS" id="BAE77137"/>
    </conflict>
    <text>Extended N-terminus.</text>
</comment>
<feature type="chain" id="PRO_0000091780" description="Uncharacterized oxidoreductase YgjR">
    <location>
        <begin position="1"/>
        <end position="328"/>
    </location>
</feature>
<keyword id="KW-0560">Oxidoreductase</keyword>
<keyword id="KW-1185">Reference proteome</keyword>
<reference key="1">
    <citation type="journal article" date="1997" name="Science">
        <title>The complete genome sequence of Escherichia coli K-12.</title>
        <authorList>
            <person name="Blattner F.R."/>
            <person name="Plunkett G. III"/>
            <person name="Bloch C.A."/>
            <person name="Perna N.T."/>
            <person name="Burland V."/>
            <person name="Riley M."/>
            <person name="Collado-Vides J."/>
            <person name="Glasner J.D."/>
            <person name="Rode C.K."/>
            <person name="Mayhew G.F."/>
            <person name="Gregor J."/>
            <person name="Davis N.W."/>
            <person name="Kirkpatrick H.A."/>
            <person name="Goeden M.A."/>
            <person name="Rose D.J."/>
            <person name="Mau B."/>
            <person name="Shao Y."/>
        </authorList>
    </citation>
    <scope>NUCLEOTIDE SEQUENCE [LARGE SCALE GENOMIC DNA]</scope>
    <source>
        <strain>K12 / MG1655 / ATCC 47076</strain>
    </source>
</reference>
<reference key="2">
    <citation type="journal article" date="2006" name="Mol. Syst. Biol.">
        <title>Highly accurate genome sequences of Escherichia coli K-12 strains MG1655 and W3110.</title>
        <authorList>
            <person name="Hayashi K."/>
            <person name="Morooka N."/>
            <person name="Yamamoto Y."/>
            <person name="Fujita K."/>
            <person name="Isono K."/>
            <person name="Choi S."/>
            <person name="Ohtsubo E."/>
            <person name="Baba T."/>
            <person name="Wanner B.L."/>
            <person name="Mori H."/>
            <person name="Horiuchi T."/>
        </authorList>
    </citation>
    <scope>NUCLEOTIDE SEQUENCE [LARGE SCALE GENOMIC DNA]</scope>
    <source>
        <strain>K12 / W3110 / ATCC 27325 / DSM 5911</strain>
    </source>
</reference>
<proteinExistence type="inferred from homology"/>
<organism>
    <name type="scientific">Escherichia coli (strain K12)</name>
    <dbReference type="NCBI Taxonomy" id="83333"/>
    <lineage>
        <taxon>Bacteria</taxon>
        <taxon>Pseudomonadati</taxon>
        <taxon>Pseudomonadota</taxon>
        <taxon>Gammaproteobacteria</taxon>
        <taxon>Enterobacterales</taxon>
        <taxon>Enterobacteriaceae</taxon>
        <taxon>Escherichia</taxon>
    </lineage>
</organism>
<name>YGJR_ECOLI</name>
<evidence type="ECO:0000305" key="1"/>
<dbReference type="EC" id="1.-.-.-"/>
<dbReference type="EMBL" id="U18997">
    <property type="protein sequence ID" value="AAA57888.1"/>
    <property type="status" value="ALT_FRAME"/>
    <property type="molecule type" value="Genomic_DNA"/>
</dbReference>
<dbReference type="EMBL" id="U18997">
    <property type="protein sequence ID" value="AAA57889.1"/>
    <property type="status" value="ALT_FRAME"/>
    <property type="molecule type" value="Genomic_DNA"/>
</dbReference>
<dbReference type="EMBL" id="U00096">
    <property type="protein sequence ID" value="AAC76122.2"/>
    <property type="molecule type" value="Genomic_DNA"/>
</dbReference>
<dbReference type="EMBL" id="AP009048">
    <property type="protein sequence ID" value="BAE77137.1"/>
    <property type="status" value="ALT_INIT"/>
    <property type="molecule type" value="Genomic_DNA"/>
</dbReference>
<dbReference type="PIR" id="D65097">
    <property type="entry name" value="D65097"/>
</dbReference>
<dbReference type="RefSeq" id="NP_417558.2">
    <property type="nucleotide sequence ID" value="NC_000913.3"/>
</dbReference>
<dbReference type="RefSeq" id="WP_000617698.1">
    <property type="nucleotide sequence ID" value="NZ_LN832404.1"/>
</dbReference>
<dbReference type="SMR" id="P42599"/>
<dbReference type="BioGRID" id="4262403">
    <property type="interactions" value="19"/>
</dbReference>
<dbReference type="BioGRID" id="851916">
    <property type="interactions" value="7"/>
</dbReference>
<dbReference type="FunCoup" id="P42599">
    <property type="interactions" value="541"/>
</dbReference>
<dbReference type="IntAct" id="P42599">
    <property type="interactions" value="10"/>
</dbReference>
<dbReference type="STRING" id="511145.b3087"/>
<dbReference type="jPOST" id="P42599"/>
<dbReference type="PaxDb" id="511145-b3087"/>
<dbReference type="EnsemblBacteria" id="AAC76122">
    <property type="protein sequence ID" value="AAC76122"/>
    <property type="gene ID" value="b3087"/>
</dbReference>
<dbReference type="GeneID" id="947600"/>
<dbReference type="KEGG" id="ecj:JW3058"/>
<dbReference type="KEGG" id="eco:b3087"/>
<dbReference type="KEGG" id="ecoc:C3026_16860"/>
<dbReference type="PATRIC" id="fig|511145.12.peg.3182"/>
<dbReference type="EchoBASE" id="EB2588"/>
<dbReference type="eggNOG" id="COG0673">
    <property type="taxonomic scope" value="Bacteria"/>
</dbReference>
<dbReference type="HOGENOM" id="CLU_023194_7_0_6"/>
<dbReference type="InParanoid" id="P42599"/>
<dbReference type="OMA" id="AHETGKY"/>
<dbReference type="OrthoDB" id="9774191at2"/>
<dbReference type="PhylomeDB" id="P42599"/>
<dbReference type="BioCyc" id="EcoCyc:G7606-MONOMER"/>
<dbReference type="PRO" id="PR:P42599"/>
<dbReference type="Proteomes" id="UP000000625">
    <property type="component" value="Chromosome"/>
</dbReference>
<dbReference type="GO" id="GO:0000166">
    <property type="term" value="F:nucleotide binding"/>
    <property type="evidence" value="ECO:0007669"/>
    <property type="project" value="InterPro"/>
</dbReference>
<dbReference type="GO" id="GO:0016491">
    <property type="term" value="F:oxidoreductase activity"/>
    <property type="evidence" value="ECO:0007669"/>
    <property type="project" value="UniProtKB-KW"/>
</dbReference>
<dbReference type="Gene3D" id="3.30.360.10">
    <property type="entry name" value="Dihydrodipicolinate Reductase, domain 2"/>
    <property type="match status" value="1"/>
</dbReference>
<dbReference type="Gene3D" id="3.40.50.720">
    <property type="entry name" value="NAD(P)-binding Rossmann-like Domain"/>
    <property type="match status" value="1"/>
</dbReference>
<dbReference type="InterPro" id="IPR000683">
    <property type="entry name" value="Gfo/Idh/MocA-like_OxRdtase_N"/>
</dbReference>
<dbReference type="InterPro" id="IPR055170">
    <property type="entry name" value="GFO_IDH_MocA-like_dom"/>
</dbReference>
<dbReference type="InterPro" id="IPR036291">
    <property type="entry name" value="NAD(P)-bd_dom_sf"/>
</dbReference>
<dbReference type="PANTHER" id="PTHR43054">
    <property type="match status" value="1"/>
</dbReference>
<dbReference type="PANTHER" id="PTHR43054:SF1">
    <property type="entry name" value="SCYLLO-INOSITOL 2-DEHYDROGENASE (NADP(+)) IOLU"/>
    <property type="match status" value="1"/>
</dbReference>
<dbReference type="Pfam" id="PF01408">
    <property type="entry name" value="GFO_IDH_MocA"/>
    <property type="match status" value="1"/>
</dbReference>
<dbReference type="Pfam" id="PF22725">
    <property type="entry name" value="GFO_IDH_MocA_C3"/>
    <property type="match status" value="1"/>
</dbReference>
<dbReference type="SUPFAM" id="SSF55347">
    <property type="entry name" value="Glyceraldehyde-3-phosphate dehydrogenase-like, C-terminal domain"/>
    <property type="match status" value="1"/>
</dbReference>
<dbReference type="SUPFAM" id="SSF51735">
    <property type="entry name" value="NAD(P)-binding Rossmann-fold domains"/>
    <property type="match status" value="1"/>
</dbReference>
<gene>
    <name type="primary">ygjR</name>
    <name type="ordered locus">b3087</name>
    <name type="ordered locus">JW3058</name>
</gene>
<protein>
    <recommendedName>
        <fullName>Uncharacterized oxidoreductase YgjR</fullName>
        <ecNumber>1.-.-.-</ecNumber>
    </recommendedName>
</protein>
<accession>P42599</accession>
<accession>P42600</accession>
<accession>P76661</accession>
<accession>Q2M9B9</accession>
<sequence length="328" mass="36214">MIRFAVIGTNWITRQFVEAAHESGKYKLTAVYSRSLEQAQHFANDFSVEHLFTSLEAMAESDAIDAVYIASPNSLHFSQTQLFLSHKINVICEKPLASNLAEVDAAIACARENQVVLFEAFKTACLPNFHLLRQALPKVGKLRKVFFNYCQYSSRYQRYLDGENPNTFNPAFSNGSIMDIGFYCLASAVALFGEPKSVQATASLLASGVDAQGVVVMDYGDFSVTLQHSKVSDSVLASEIQGEAGSLVIEKLSECQKVCFVPRGSQMQDLTQPQHINTMLYEAELFATLVDEHLVDHPGLAVSRITAKLLTEIRRQTGVIFPADSVKL</sequence>